<organism>
    <name type="scientific">Clostridium perfringens (strain 13 / Type A)</name>
    <dbReference type="NCBI Taxonomy" id="195102"/>
    <lineage>
        <taxon>Bacteria</taxon>
        <taxon>Bacillati</taxon>
        <taxon>Bacillota</taxon>
        <taxon>Clostridia</taxon>
        <taxon>Eubacteriales</taxon>
        <taxon>Clostridiaceae</taxon>
        <taxon>Clostridium</taxon>
    </lineage>
</organism>
<comment type="function">
    <text evidence="1">Modulates transcription in response to changes in cellular NADH/NAD(+) redox state.</text>
</comment>
<comment type="subunit">
    <text evidence="1">Homodimer.</text>
</comment>
<comment type="subcellular location">
    <subcellularLocation>
        <location evidence="1">Cytoplasm</location>
    </subcellularLocation>
</comment>
<comment type="similarity">
    <text evidence="1">Belongs to the transcriptional regulatory Rex family.</text>
</comment>
<sequence>MEKKKGISMAVIKRLPKYHRYLQELMENDVDRISSKELSEKIGFTASQIRQDLNCFGDFGQQGYGYNVKELYNNIGSILGLTRDYNTVIIGAGNIGQAIANYNSFNRLGFKLKGIFDANPRMFGIKIRDVEIQDVEKLKDFVKENDIEIGIICVPRTNAQKVCNDLVEGGIKGIWNFAPIDLEVPKDIRVENVHLSESMMTLVYLLNHNDVK</sequence>
<name>REX_CLOPE</name>
<dbReference type="EMBL" id="BA000016">
    <property type="protein sequence ID" value="BAB82008.1"/>
    <property type="molecule type" value="Genomic_DNA"/>
</dbReference>
<dbReference type="RefSeq" id="WP_003454253.1">
    <property type="nucleotide sequence ID" value="NC_003366.1"/>
</dbReference>
<dbReference type="SMR" id="Q8XI22"/>
<dbReference type="STRING" id="195102.gene:10491610"/>
<dbReference type="KEGG" id="cpe:CPE2302"/>
<dbReference type="HOGENOM" id="CLU_061534_1_0_9"/>
<dbReference type="Proteomes" id="UP000000818">
    <property type="component" value="Chromosome"/>
</dbReference>
<dbReference type="GO" id="GO:0005737">
    <property type="term" value="C:cytoplasm"/>
    <property type="evidence" value="ECO:0007669"/>
    <property type="project" value="UniProtKB-SubCell"/>
</dbReference>
<dbReference type="GO" id="GO:0003677">
    <property type="term" value="F:DNA binding"/>
    <property type="evidence" value="ECO:0007669"/>
    <property type="project" value="UniProtKB-UniRule"/>
</dbReference>
<dbReference type="GO" id="GO:0003700">
    <property type="term" value="F:DNA-binding transcription factor activity"/>
    <property type="evidence" value="ECO:0007669"/>
    <property type="project" value="UniProtKB-UniRule"/>
</dbReference>
<dbReference type="GO" id="GO:0045892">
    <property type="term" value="P:negative regulation of DNA-templated transcription"/>
    <property type="evidence" value="ECO:0007669"/>
    <property type="project" value="InterPro"/>
</dbReference>
<dbReference type="GO" id="GO:0051775">
    <property type="term" value="P:response to redox state"/>
    <property type="evidence" value="ECO:0007669"/>
    <property type="project" value="InterPro"/>
</dbReference>
<dbReference type="Gene3D" id="3.40.50.720">
    <property type="entry name" value="NAD(P)-binding Rossmann-like Domain"/>
    <property type="match status" value="1"/>
</dbReference>
<dbReference type="Gene3D" id="1.10.10.10">
    <property type="entry name" value="Winged helix-like DNA-binding domain superfamily/Winged helix DNA-binding domain"/>
    <property type="match status" value="1"/>
</dbReference>
<dbReference type="HAMAP" id="MF_01131">
    <property type="entry name" value="Rex"/>
    <property type="match status" value="1"/>
</dbReference>
<dbReference type="InterPro" id="IPR003781">
    <property type="entry name" value="CoA-bd"/>
</dbReference>
<dbReference type="InterPro" id="IPR036291">
    <property type="entry name" value="NAD(P)-bd_dom_sf"/>
</dbReference>
<dbReference type="InterPro" id="IPR009718">
    <property type="entry name" value="Rex_DNA-bd_C_dom"/>
</dbReference>
<dbReference type="InterPro" id="IPR022876">
    <property type="entry name" value="Tscrpt_rep_Rex"/>
</dbReference>
<dbReference type="InterPro" id="IPR036388">
    <property type="entry name" value="WH-like_DNA-bd_sf"/>
</dbReference>
<dbReference type="InterPro" id="IPR036390">
    <property type="entry name" value="WH_DNA-bd_sf"/>
</dbReference>
<dbReference type="NCBIfam" id="NF003989">
    <property type="entry name" value="PRK05472.1-3"/>
    <property type="match status" value="1"/>
</dbReference>
<dbReference type="NCBIfam" id="NF003990">
    <property type="entry name" value="PRK05472.1-4"/>
    <property type="match status" value="1"/>
</dbReference>
<dbReference type="NCBIfam" id="NF003993">
    <property type="entry name" value="PRK05472.2-2"/>
    <property type="match status" value="1"/>
</dbReference>
<dbReference type="NCBIfam" id="NF003994">
    <property type="entry name" value="PRK05472.2-3"/>
    <property type="match status" value="1"/>
</dbReference>
<dbReference type="NCBIfam" id="NF003995">
    <property type="entry name" value="PRK05472.2-4"/>
    <property type="match status" value="1"/>
</dbReference>
<dbReference type="NCBIfam" id="NF003996">
    <property type="entry name" value="PRK05472.2-5"/>
    <property type="match status" value="1"/>
</dbReference>
<dbReference type="PANTHER" id="PTHR35786">
    <property type="entry name" value="REDOX-SENSING TRANSCRIPTIONAL REPRESSOR REX"/>
    <property type="match status" value="1"/>
</dbReference>
<dbReference type="PANTHER" id="PTHR35786:SF1">
    <property type="entry name" value="REDOX-SENSING TRANSCRIPTIONAL REPRESSOR REX 1"/>
    <property type="match status" value="1"/>
</dbReference>
<dbReference type="Pfam" id="PF02629">
    <property type="entry name" value="CoA_binding"/>
    <property type="match status" value="1"/>
</dbReference>
<dbReference type="Pfam" id="PF06971">
    <property type="entry name" value="Put_DNA-bind_N"/>
    <property type="match status" value="1"/>
</dbReference>
<dbReference type="SMART" id="SM00881">
    <property type="entry name" value="CoA_binding"/>
    <property type="match status" value="1"/>
</dbReference>
<dbReference type="SUPFAM" id="SSF51735">
    <property type="entry name" value="NAD(P)-binding Rossmann-fold domains"/>
    <property type="match status" value="1"/>
</dbReference>
<dbReference type="SUPFAM" id="SSF46785">
    <property type="entry name" value="Winged helix' DNA-binding domain"/>
    <property type="match status" value="1"/>
</dbReference>
<accession>Q8XI22</accession>
<gene>
    <name evidence="1" type="primary">rex</name>
    <name type="ordered locus">CPE2302</name>
</gene>
<feature type="chain" id="PRO_0000097888" description="Redox-sensing transcriptional repressor Rex">
    <location>
        <begin position="1"/>
        <end position="212"/>
    </location>
</feature>
<feature type="DNA-binding region" description="H-T-H motif" evidence="1">
    <location>
        <begin position="17"/>
        <end position="56"/>
    </location>
</feature>
<feature type="binding site" evidence="1">
    <location>
        <begin position="91"/>
        <end position="96"/>
    </location>
    <ligand>
        <name>NAD(+)</name>
        <dbReference type="ChEBI" id="CHEBI:57540"/>
    </ligand>
</feature>
<keyword id="KW-0963">Cytoplasm</keyword>
<keyword id="KW-0238">DNA-binding</keyword>
<keyword id="KW-0520">NAD</keyword>
<keyword id="KW-1185">Reference proteome</keyword>
<keyword id="KW-0678">Repressor</keyword>
<keyword id="KW-0804">Transcription</keyword>
<keyword id="KW-0805">Transcription regulation</keyword>
<evidence type="ECO:0000255" key="1">
    <source>
        <dbReference type="HAMAP-Rule" id="MF_01131"/>
    </source>
</evidence>
<protein>
    <recommendedName>
        <fullName evidence="1">Redox-sensing transcriptional repressor Rex</fullName>
    </recommendedName>
</protein>
<reference key="1">
    <citation type="journal article" date="2002" name="Proc. Natl. Acad. Sci. U.S.A.">
        <title>Complete genome sequence of Clostridium perfringens, an anaerobic flesh-eater.</title>
        <authorList>
            <person name="Shimizu T."/>
            <person name="Ohtani K."/>
            <person name="Hirakawa H."/>
            <person name="Ohshima K."/>
            <person name="Yamashita A."/>
            <person name="Shiba T."/>
            <person name="Ogasawara N."/>
            <person name="Hattori M."/>
            <person name="Kuhara S."/>
            <person name="Hayashi H."/>
        </authorList>
    </citation>
    <scope>NUCLEOTIDE SEQUENCE [LARGE SCALE GENOMIC DNA]</scope>
    <source>
        <strain>13 / Type A</strain>
    </source>
</reference>
<proteinExistence type="inferred from homology"/>